<comment type="similarity">
    <text evidence="1">Belongs to the bacterial ribosomal protein bL33 family.</text>
</comment>
<evidence type="ECO:0000255" key="1">
    <source>
        <dbReference type="HAMAP-Rule" id="MF_00294"/>
    </source>
</evidence>
<keyword id="KW-0687">Ribonucleoprotein</keyword>
<keyword id="KW-0689">Ribosomal protein</keyword>
<name>RL331_STRPI</name>
<reference key="1">
    <citation type="journal article" date="2010" name="Genome Biol.">
        <title>Structure and dynamics of the pan-genome of Streptococcus pneumoniae and closely related species.</title>
        <authorList>
            <person name="Donati C."/>
            <person name="Hiller N.L."/>
            <person name="Tettelin H."/>
            <person name="Muzzi A."/>
            <person name="Croucher N.J."/>
            <person name="Angiuoli S.V."/>
            <person name="Oggioni M."/>
            <person name="Dunning Hotopp J.C."/>
            <person name="Hu F.Z."/>
            <person name="Riley D.R."/>
            <person name="Covacci A."/>
            <person name="Mitchell T.J."/>
            <person name="Bentley S.D."/>
            <person name="Kilian M."/>
            <person name="Ehrlich G.D."/>
            <person name="Rappuoli R."/>
            <person name="Moxon E.R."/>
            <person name="Masignani V."/>
        </authorList>
    </citation>
    <scope>NUCLEOTIDE SEQUENCE [LARGE SCALE GENOMIC DNA]</scope>
    <source>
        <strain>Hungary19A-6</strain>
    </source>
</reference>
<sequence>MRVKINLKCSSCDSINYLTSKNSKTHPDKIEVLKYCPKERKVTLHLESK</sequence>
<feature type="chain" id="PRO_0000356713" description="Large ribosomal subunit protein bL33A">
    <location>
        <begin position="1"/>
        <end position="49"/>
    </location>
</feature>
<organism>
    <name type="scientific">Streptococcus pneumoniae (strain Hungary19A-6)</name>
    <dbReference type="NCBI Taxonomy" id="487214"/>
    <lineage>
        <taxon>Bacteria</taxon>
        <taxon>Bacillati</taxon>
        <taxon>Bacillota</taxon>
        <taxon>Bacilli</taxon>
        <taxon>Lactobacillales</taxon>
        <taxon>Streptococcaceae</taxon>
        <taxon>Streptococcus</taxon>
    </lineage>
</organism>
<dbReference type="EMBL" id="CP000936">
    <property type="protein sequence ID" value="ACA36363.1"/>
    <property type="molecule type" value="Genomic_DNA"/>
</dbReference>
<dbReference type="SMR" id="B1IBD3"/>
<dbReference type="KEGG" id="spv:SPH_1074"/>
<dbReference type="HOGENOM" id="CLU_190949_0_2_9"/>
<dbReference type="Proteomes" id="UP000002163">
    <property type="component" value="Chromosome"/>
</dbReference>
<dbReference type="GO" id="GO:0005737">
    <property type="term" value="C:cytoplasm"/>
    <property type="evidence" value="ECO:0007669"/>
    <property type="project" value="UniProtKB-ARBA"/>
</dbReference>
<dbReference type="GO" id="GO:1990904">
    <property type="term" value="C:ribonucleoprotein complex"/>
    <property type="evidence" value="ECO:0007669"/>
    <property type="project" value="UniProtKB-KW"/>
</dbReference>
<dbReference type="GO" id="GO:0005840">
    <property type="term" value="C:ribosome"/>
    <property type="evidence" value="ECO:0007669"/>
    <property type="project" value="UniProtKB-KW"/>
</dbReference>
<dbReference type="GO" id="GO:0003735">
    <property type="term" value="F:structural constituent of ribosome"/>
    <property type="evidence" value="ECO:0007669"/>
    <property type="project" value="InterPro"/>
</dbReference>
<dbReference type="GO" id="GO:0006412">
    <property type="term" value="P:translation"/>
    <property type="evidence" value="ECO:0007669"/>
    <property type="project" value="UniProtKB-UniRule"/>
</dbReference>
<dbReference type="Gene3D" id="2.20.28.120">
    <property type="entry name" value="Ribosomal protein L33"/>
    <property type="match status" value="1"/>
</dbReference>
<dbReference type="HAMAP" id="MF_00294">
    <property type="entry name" value="Ribosomal_bL33"/>
    <property type="match status" value="1"/>
</dbReference>
<dbReference type="InterPro" id="IPR001705">
    <property type="entry name" value="Ribosomal_bL33"/>
</dbReference>
<dbReference type="InterPro" id="IPR018264">
    <property type="entry name" value="Ribosomal_bL33_CS"/>
</dbReference>
<dbReference type="InterPro" id="IPR038584">
    <property type="entry name" value="Ribosomal_bL33_sf"/>
</dbReference>
<dbReference type="InterPro" id="IPR011332">
    <property type="entry name" value="Ribosomal_zn-bd"/>
</dbReference>
<dbReference type="NCBIfam" id="NF001764">
    <property type="entry name" value="PRK00504.1"/>
    <property type="match status" value="1"/>
</dbReference>
<dbReference type="NCBIfam" id="NF001860">
    <property type="entry name" value="PRK00595.1"/>
    <property type="match status" value="1"/>
</dbReference>
<dbReference type="NCBIfam" id="TIGR01023">
    <property type="entry name" value="rpmG_bact"/>
    <property type="match status" value="1"/>
</dbReference>
<dbReference type="PANTHER" id="PTHR43168">
    <property type="entry name" value="50S RIBOSOMAL PROTEIN L33, CHLOROPLASTIC"/>
    <property type="match status" value="1"/>
</dbReference>
<dbReference type="PANTHER" id="PTHR43168:SF6">
    <property type="entry name" value="LARGE RIBOSOMAL SUBUNIT PROTEIN BL33A"/>
    <property type="match status" value="1"/>
</dbReference>
<dbReference type="Pfam" id="PF00471">
    <property type="entry name" value="Ribosomal_L33"/>
    <property type="match status" value="1"/>
</dbReference>
<dbReference type="SUPFAM" id="SSF57829">
    <property type="entry name" value="Zn-binding ribosomal proteins"/>
    <property type="match status" value="1"/>
</dbReference>
<dbReference type="PROSITE" id="PS00582">
    <property type="entry name" value="RIBOSOMAL_L33"/>
    <property type="match status" value="1"/>
</dbReference>
<proteinExistence type="inferred from homology"/>
<protein>
    <recommendedName>
        <fullName evidence="1">Large ribosomal subunit protein bL33A</fullName>
    </recommendedName>
    <alternativeName>
        <fullName evidence="1">50S ribosomal protein L33 1</fullName>
    </alternativeName>
</protein>
<gene>
    <name evidence="1" type="primary">rpmG1</name>
    <name type="ordered locus">SPH_1074</name>
</gene>
<accession>B1IBD3</accession>